<gene>
    <name type="primary">LOC106584303</name>
</gene>
<proteinExistence type="evidence at protein level"/>
<reference key="1">
    <citation type="submission" date="2011-10" db="EMBL/GenBank/DDBJ databases">
        <authorList>
            <person name="Lien S."/>
            <person name="Koop B.F."/>
            <person name="Miller J.R."/>
            <person name="Kent M.P."/>
            <person name="Sandve S.R."/>
            <person name="Nome T."/>
            <person name="Hvidsten T.R."/>
            <person name="Grammes F."/>
            <person name="Grove H."/>
            <person name="Gjuvsland A."/>
            <person name="Karloss J."/>
            <person name="Vage D.I."/>
            <person name="Leong J.S."/>
            <person name="Minkley D."/>
            <person name="von Schalburg K."/>
            <person name="Rondeau E."/>
            <person name="Zimin A."/>
            <person name="Walenz B."/>
            <person name="Di Genova A."/>
            <person name="Smith D."/>
            <person name="Grimholt U."/>
            <person name="de Jong P."/>
            <person name="Moen T."/>
            <person name="Maass A."/>
            <person name="Vidal R."/>
            <person name="Iturra P."/>
            <person name="Jones S.J.M."/>
            <person name="Jonassen I."/>
            <person name="Omholt S.W."/>
            <person name="Davidson W.S."/>
        </authorList>
    </citation>
    <scope>NUCLEOTIDE SEQUENCE [LARGE SCALE GENOMIC DNA]</scope>
    <source>
        <tissue>Muscle</tissue>
    </source>
</reference>
<reference key="2">
    <citation type="journal article" date="1999" name="Eur. J. Biochem.">
        <title>Atlantic salmon (Salmo salar L.) skin contains a novel kininogen and another cysteine proteinase inhibitor.</title>
        <authorList>
            <person name="Yloenen A."/>
            <person name="Rinne A."/>
            <person name="Herttuainen J."/>
            <person name="Bogwald J."/>
            <person name="Jaervinen M."/>
            <person name="Kalkkinen N."/>
        </authorList>
    </citation>
    <scope>PROTEIN SEQUENCE OF N-TERMINUS</scope>
    <scope>PARTIAL PROTEIN SEQUENCE</scope>
    <scope>FUNCTION</scope>
    <scope>MASS SPECTROMETRY</scope>
    <scope>GLYCOSYLATION</scope>
</reference>
<reference key="3">
    <citation type="journal article" date="2001" name="Glycobiology">
        <title>Glycosylation analysis of two cysteine proteinase inhibitors from Atlantic salmon skin: di-O-acetylated sialic acids are the major sialic acid species on N-glycans.</title>
        <authorList>
            <person name="Yloenen A."/>
            <person name="Kalkkinen N."/>
            <person name="Saarinen J."/>
            <person name="Boegwald J."/>
            <person name="Helin J."/>
        </authorList>
    </citation>
    <scope>PROTEIN SEQUENCE OF 72-87 AND 218-244</scope>
    <scope>GLYCOSYLATION AT ASN-74 AND ASN-235</scope>
</reference>
<reference key="4">
    <citation type="journal article" date="2002" name="Cell Tissue Res.">
        <title>Immunolocalization of cysteine proteinases (cathepsins) and cysteine proteinase inhibitors (salarin and salmon kininogen) in Atlantic salmon, Salmo salar.</title>
        <authorList>
            <person name="Taehtinen V."/>
            <person name="Weber E."/>
            <person name="Guenther D."/>
            <person name="Yloenen A."/>
            <person name="Kalkkinen N."/>
            <person name="Olsen R."/>
            <person name="Jaervinen M."/>
            <person name="Soederstroem K.O."/>
            <person name="Rinne A."/>
            <person name="Bjoerklund H."/>
            <person name="Boegwald J."/>
        </authorList>
    </citation>
    <scope>SUBCELLULAR LOCATION</scope>
    <scope>TISSUE SPECIFICITY</scope>
</reference>
<dbReference type="EMBL" id="AGKD04000030">
    <property type="status" value="NOT_ANNOTATED_CDS"/>
    <property type="molecule type" value="Genomic_DNA"/>
</dbReference>
<dbReference type="RefSeq" id="XP_014024862.1">
    <property type="nucleotide sequence ID" value="XM_014169387.1"/>
</dbReference>
<dbReference type="SMR" id="A0A1S3PBB7"/>
<dbReference type="STRING" id="8030.ENSSSAP00000084884"/>
<dbReference type="GlyCosmos" id="A0A1S3PBB7">
    <property type="glycosylation" value="2 sites, No reported glycans"/>
</dbReference>
<dbReference type="iPTMnet" id="A0A1S3PBB7"/>
<dbReference type="PaxDb" id="8030-ENSSSAP00000084884"/>
<dbReference type="Ensembl" id="ENSSSAT00070014179">
    <property type="protein sequence ID" value="ENSSSAP00070013450"/>
    <property type="gene ID" value="ENSSSAG00070009044"/>
</dbReference>
<dbReference type="Ensembl" id="ENSSSAT00075089566">
    <property type="protein sequence ID" value="ENSSSAP00075065148"/>
    <property type="gene ID" value="ENSSSAG00075042742"/>
</dbReference>
<dbReference type="GeneID" id="106584303"/>
<dbReference type="KEGG" id="sasa:106584303"/>
<dbReference type="Proteomes" id="UP000087266">
    <property type="component" value="Chromosome ssa23"/>
</dbReference>
<dbReference type="Bgee" id="ENSSSAG00000068757">
    <property type="expression patterns" value="Expressed in heart and 18 other cell types or tissues"/>
</dbReference>
<dbReference type="GO" id="GO:0072562">
    <property type="term" value="C:blood microparticle"/>
    <property type="evidence" value="ECO:0007669"/>
    <property type="project" value="TreeGrafter"/>
</dbReference>
<dbReference type="GO" id="GO:0005737">
    <property type="term" value="C:cytoplasm"/>
    <property type="evidence" value="ECO:0000314"/>
    <property type="project" value="UniProtKB"/>
</dbReference>
<dbReference type="GO" id="GO:0005773">
    <property type="term" value="C:vacuole"/>
    <property type="evidence" value="ECO:0000314"/>
    <property type="project" value="UniProtKB"/>
</dbReference>
<dbReference type="GO" id="GO:0004869">
    <property type="term" value="F:cysteine-type endopeptidase inhibitor activity"/>
    <property type="evidence" value="ECO:0000314"/>
    <property type="project" value="UniProtKB"/>
</dbReference>
<dbReference type="GO" id="GO:0030195">
    <property type="term" value="P:negative regulation of blood coagulation"/>
    <property type="evidence" value="ECO:0007669"/>
    <property type="project" value="TreeGrafter"/>
</dbReference>
<dbReference type="GO" id="GO:0007204">
    <property type="term" value="P:positive regulation of cytosolic calcium ion concentration"/>
    <property type="evidence" value="ECO:0007669"/>
    <property type="project" value="TreeGrafter"/>
</dbReference>
<dbReference type="CDD" id="cd00042">
    <property type="entry name" value="CY"/>
    <property type="match status" value="2"/>
</dbReference>
<dbReference type="FunFam" id="3.10.450.10:FF:000002">
    <property type="entry name" value="Kininogen 1"/>
    <property type="match status" value="1"/>
</dbReference>
<dbReference type="Gene3D" id="3.10.450.10">
    <property type="match status" value="2"/>
</dbReference>
<dbReference type="InterPro" id="IPR000010">
    <property type="entry name" value="Cystatin_dom"/>
</dbReference>
<dbReference type="InterPro" id="IPR046350">
    <property type="entry name" value="Cystatin_sf"/>
</dbReference>
<dbReference type="InterPro" id="IPR027358">
    <property type="entry name" value="Kininogen-type_cystatin_dom"/>
</dbReference>
<dbReference type="InterPro" id="IPR050735">
    <property type="entry name" value="Kininogen_Fetuin_HRG"/>
</dbReference>
<dbReference type="PANTHER" id="PTHR13814">
    <property type="entry name" value="FETUIN"/>
    <property type="match status" value="1"/>
</dbReference>
<dbReference type="PANTHER" id="PTHR13814:SF12">
    <property type="entry name" value="KININOGEN-1"/>
    <property type="match status" value="1"/>
</dbReference>
<dbReference type="Pfam" id="PF00031">
    <property type="entry name" value="Cystatin"/>
    <property type="match status" value="2"/>
</dbReference>
<dbReference type="SMART" id="SM00043">
    <property type="entry name" value="CY"/>
    <property type="match status" value="2"/>
</dbReference>
<dbReference type="SUPFAM" id="SSF54403">
    <property type="entry name" value="Cystatin/monellin"/>
    <property type="match status" value="2"/>
</dbReference>
<dbReference type="PROSITE" id="PS51647">
    <property type="entry name" value="CYSTATIN_KININOGEN"/>
    <property type="match status" value="2"/>
</dbReference>
<accession>A0A1S3PBB7</accession>
<evidence type="ECO:0000250" key="1">
    <source>
        <dbReference type="UniProtKB" id="P01042"/>
    </source>
</evidence>
<evidence type="ECO:0000255" key="2">
    <source>
        <dbReference type="PROSITE-ProRule" id="PRU00979"/>
    </source>
</evidence>
<evidence type="ECO:0000256" key="3">
    <source>
        <dbReference type="SAM" id="MobiDB-lite"/>
    </source>
</evidence>
<evidence type="ECO:0000269" key="4">
    <source>
    </source>
</evidence>
<evidence type="ECO:0000269" key="5">
    <source>
    </source>
</evidence>
<evidence type="ECO:0000269" key="6">
    <source>
    </source>
</evidence>
<protein>
    <recommendedName>
        <fullName>Kininogen</fullName>
    </recommendedName>
    <component>
        <recommendedName>
            <fullName>Bradykinin</fullName>
        </recommendedName>
    </component>
</protein>
<feature type="signal peptide" evidence="4">
    <location>
        <begin position="1"/>
        <end position="23"/>
    </location>
</feature>
<feature type="chain" id="PRO_5010208301" description="Kininogen">
    <location>
        <begin position="24"/>
        <end position="375"/>
    </location>
</feature>
<feature type="peptide" id="PRO_0000455009" description="Bradykinin" evidence="1">
    <location>
        <begin position="268"/>
        <end position="276"/>
    </location>
</feature>
<feature type="domain" description="Cystatin kininogen-type 1" evidence="2">
    <location>
        <begin position="35"/>
        <end position="139"/>
    </location>
</feature>
<feature type="domain" description="Cystatin kininogen-type 2" evidence="2">
    <location>
        <begin position="156"/>
        <end position="260"/>
    </location>
</feature>
<feature type="region of interest" description="Disordered" evidence="3">
    <location>
        <begin position="283"/>
        <end position="375"/>
    </location>
</feature>
<feature type="glycosylation site" description="N-linked (GlcNAc) asparagine" evidence="5">
    <location>
        <position position="74"/>
    </location>
</feature>
<feature type="glycosylation site" description="N-linked (GlcNAc) asparagine" evidence="5">
    <location>
        <position position="235"/>
    </location>
</feature>
<feature type="disulfide bond" evidence="2">
    <location>
        <begin position="91"/>
        <end position="102"/>
    </location>
</feature>
<feature type="disulfide bond" evidence="2">
    <location>
        <begin position="115"/>
        <end position="133"/>
    </location>
</feature>
<feature type="disulfide bond" evidence="2">
    <location>
        <begin position="211"/>
        <end position="223"/>
    </location>
</feature>
<feature type="disulfide bond" evidence="2">
    <location>
        <begin position="234"/>
        <end position="254"/>
    </location>
</feature>
<organism>
    <name type="scientific">Salmo salar</name>
    <name type="common">Atlantic salmon</name>
    <dbReference type="NCBI Taxonomy" id="8030"/>
    <lineage>
        <taxon>Eukaryota</taxon>
        <taxon>Metazoa</taxon>
        <taxon>Chordata</taxon>
        <taxon>Craniata</taxon>
        <taxon>Vertebrata</taxon>
        <taxon>Euteleostomi</taxon>
        <taxon>Actinopterygii</taxon>
        <taxon>Neopterygii</taxon>
        <taxon>Teleostei</taxon>
        <taxon>Protacanthopterygii</taxon>
        <taxon>Salmoniformes</taxon>
        <taxon>Salmonidae</taxon>
        <taxon>Salmoninae</taxon>
        <taxon>Salmo</taxon>
    </lineage>
</organism>
<keyword id="KW-0165">Cleavage on pair of basic residues</keyword>
<keyword id="KW-0963">Cytoplasm</keyword>
<keyword id="KW-0903">Direct protein sequencing</keyword>
<keyword id="KW-1015">Disulfide bond</keyword>
<keyword id="KW-0325">Glycoprotein</keyword>
<keyword id="KW-0646">Protease inhibitor</keyword>
<keyword id="KW-1185">Reference proteome</keyword>
<keyword id="KW-0732">Signal</keyword>
<keyword id="KW-0789">Thiol protease inhibitor</keyword>
<keyword id="KW-0926">Vacuole</keyword>
<comment type="function">
    <text evidence="4">Inhibits papain and ficin (cysteine proteinases) but not trypsin (a serine proteinase).</text>
</comment>
<comment type="subcellular location">
    <subcellularLocation>
        <location evidence="6">Cytoplasm</location>
    </subcellularLocation>
    <subcellularLocation>
        <location evidence="6">Vacuole</location>
    </subcellularLocation>
</comment>
<comment type="tissue specificity">
    <text evidence="6">Expressed in the skin, liver, intestine, spleen, pancreas and kidney.</text>
</comment>
<comment type="PTM">
    <text evidence="5">N-glycosylated, with sialylated biantennary complex-type glycans.</text>
</comment>
<comment type="PTM">
    <text evidence="5">O-glycosylated, sialylated oligosaccharides.</text>
</comment>
<comment type="PTM">
    <text evidence="1">Bradykinin is released from kininogen by kallikrein.</text>
</comment>
<comment type="PTM">
    <text evidence="4">The N-terminus is blocked.</text>
</comment>
<comment type="mass spectrometry" mass="52000.0" method="MALDI" evidence="4">
    <molecule>Kininogen</molecule>
</comment>
<name>KNG_SALSA</name>
<sequence length="375" mass="41560">MKLGVRLCVLVVFSLQLWGPGQGQELEPEQVLAFCDDKDVEAAVDLALVKYNQKLPYGNQLALYQILESSKAQNDSCTQYFVEFNSRVTDCPAGGDKVWRDCDYLPTGNKVPRPCKATVHMSETDKKVLAVFCDPVEAPVVAERTTCLGCPREIDVESEDLKDPLTYSITRFNADSDSSHHFILNSVGFATRQVVAGFRYRLMFDMRKSNCSKADHKELNDECHPDPDVELAHCNSTVDVAPWRHETAEANVECAPGPLDNFDVFRRRPPGWSPLRNFNNFAEVKTTQASTASAKEESSEESQERSPSAVTMANPEPALPSVAPTTAAESPFHCPSKPWKQFVPPTTLRPAQEKSPTPLPVVEEGLSDLDLLGKK</sequence>